<reference key="1">
    <citation type="journal article" date="2005" name="Genome Res.">
        <title>Living with two extremes: conclusions from the genome sequence of Natronomonas pharaonis.</title>
        <authorList>
            <person name="Falb M."/>
            <person name="Pfeiffer F."/>
            <person name="Palm P."/>
            <person name="Rodewald K."/>
            <person name="Hickmann V."/>
            <person name="Tittor J."/>
            <person name="Oesterhelt D."/>
        </authorList>
    </citation>
    <scope>NUCLEOTIDE SEQUENCE [LARGE SCALE GENOMIC DNA]</scope>
    <source>
        <strain>ATCC 35678 / DSM 2160 / CIP 103997 / JCM 8858 / NBRC 14720 / NCIMB 2260 / Gabara</strain>
    </source>
</reference>
<protein>
    <recommendedName>
        <fullName evidence="1">Large ribosomal subunit protein uL4</fullName>
    </recommendedName>
    <alternativeName>
        <fullName evidence="3">50S ribosomal protein L4</fullName>
    </alternativeName>
</protein>
<dbReference type="EMBL" id="CR936257">
    <property type="protein sequence ID" value="CAI50519.1"/>
    <property type="molecule type" value="Genomic_DNA"/>
</dbReference>
<dbReference type="RefSeq" id="WP_011324131.1">
    <property type="nucleotide sequence ID" value="NC_007426.1"/>
</dbReference>
<dbReference type="SMR" id="Q3IMY7"/>
<dbReference type="STRING" id="348780.NP_4856A"/>
<dbReference type="EnsemblBacteria" id="CAI50519">
    <property type="protein sequence ID" value="CAI50519"/>
    <property type="gene ID" value="NP_4856A"/>
</dbReference>
<dbReference type="GeneID" id="3703145"/>
<dbReference type="KEGG" id="nph:NP_4856A"/>
<dbReference type="eggNOG" id="arCOG04071">
    <property type="taxonomic scope" value="Archaea"/>
</dbReference>
<dbReference type="HOGENOM" id="CLU_026535_0_0_2"/>
<dbReference type="OrthoDB" id="10737at2157"/>
<dbReference type="Proteomes" id="UP000002698">
    <property type="component" value="Chromosome"/>
</dbReference>
<dbReference type="GO" id="GO:1990904">
    <property type="term" value="C:ribonucleoprotein complex"/>
    <property type="evidence" value="ECO:0007669"/>
    <property type="project" value="UniProtKB-KW"/>
</dbReference>
<dbReference type="GO" id="GO:0005840">
    <property type="term" value="C:ribosome"/>
    <property type="evidence" value="ECO:0007669"/>
    <property type="project" value="UniProtKB-KW"/>
</dbReference>
<dbReference type="GO" id="GO:0019843">
    <property type="term" value="F:rRNA binding"/>
    <property type="evidence" value="ECO:0007669"/>
    <property type="project" value="UniProtKB-UniRule"/>
</dbReference>
<dbReference type="GO" id="GO:0003735">
    <property type="term" value="F:structural constituent of ribosome"/>
    <property type="evidence" value="ECO:0007669"/>
    <property type="project" value="InterPro"/>
</dbReference>
<dbReference type="GO" id="GO:0006412">
    <property type="term" value="P:translation"/>
    <property type="evidence" value="ECO:0007669"/>
    <property type="project" value="UniProtKB-UniRule"/>
</dbReference>
<dbReference type="Gene3D" id="3.40.1370.10">
    <property type="match status" value="1"/>
</dbReference>
<dbReference type="HAMAP" id="MF_01328_A">
    <property type="entry name" value="Ribosomal_uL4_A"/>
    <property type="match status" value="1"/>
</dbReference>
<dbReference type="InterPro" id="IPR002136">
    <property type="entry name" value="Ribosomal_uL4"/>
</dbReference>
<dbReference type="InterPro" id="IPR023574">
    <property type="entry name" value="Ribosomal_uL4_dom_sf"/>
</dbReference>
<dbReference type="InterPro" id="IPR013000">
    <property type="entry name" value="Ribosomal_uL4_euk/arc_CS"/>
</dbReference>
<dbReference type="InterPro" id="IPR045240">
    <property type="entry name" value="Ribosomal_uL4_euk/arch"/>
</dbReference>
<dbReference type="InterPro" id="IPR019970">
    <property type="entry name" value="Ribosomall_uL4-arc"/>
</dbReference>
<dbReference type="NCBIfam" id="TIGR03672">
    <property type="entry name" value="rpl4p_arch"/>
    <property type="match status" value="1"/>
</dbReference>
<dbReference type="PANTHER" id="PTHR19431">
    <property type="entry name" value="60S RIBOSOMAL PROTEIN L4"/>
    <property type="match status" value="1"/>
</dbReference>
<dbReference type="Pfam" id="PF00573">
    <property type="entry name" value="Ribosomal_L4"/>
    <property type="match status" value="1"/>
</dbReference>
<dbReference type="SUPFAM" id="SSF52166">
    <property type="entry name" value="Ribosomal protein L4"/>
    <property type="match status" value="1"/>
</dbReference>
<dbReference type="PROSITE" id="PS00939">
    <property type="entry name" value="RIBOSOMAL_L1E"/>
    <property type="match status" value="1"/>
</dbReference>
<proteinExistence type="inferred from homology"/>
<accession>Q3IMY7</accession>
<evidence type="ECO:0000255" key="1">
    <source>
        <dbReference type="HAMAP-Rule" id="MF_01328"/>
    </source>
</evidence>
<evidence type="ECO:0000256" key="2">
    <source>
        <dbReference type="SAM" id="MobiDB-lite"/>
    </source>
</evidence>
<evidence type="ECO:0000305" key="3"/>
<feature type="chain" id="PRO_0000242470" description="Large ribosomal subunit protein uL4">
    <location>
        <begin position="1"/>
        <end position="248"/>
    </location>
</feature>
<feature type="region of interest" description="Disordered" evidence="2">
    <location>
        <begin position="44"/>
        <end position="109"/>
    </location>
</feature>
<feature type="compositionally biased region" description="Basic and acidic residues" evidence="2">
    <location>
        <begin position="92"/>
        <end position="109"/>
    </location>
</feature>
<gene>
    <name evidence="1" type="primary">rpl4</name>
    <name type="ordered locus">NP_4856A</name>
</gene>
<keyword id="KW-1185">Reference proteome</keyword>
<keyword id="KW-0687">Ribonucleoprotein</keyword>
<keyword id="KW-0689">Ribosomal protein</keyword>
<keyword id="KW-0694">RNA-binding</keyword>
<keyword id="KW-0699">rRNA-binding</keyword>
<organism>
    <name type="scientific">Natronomonas pharaonis (strain ATCC 35678 / DSM 2160 / CIP 103997 / JCM 8858 / NBRC 14720 / NCIMB 2260 / Gabara)</name>
    <name type="common">Halobacterium pharaonis</name>
    <dbReference type="NCBI Taxonomy" id="348780"/>
    <lineage>
        <taxon>Archaea</taxon>
        <taxon>Methanobacteriati</taxon>
        <taxon>Methanobacteriota</taxon>
        <taxon>Stenosarchaea group</taxon>
        <taxon>Halobacteria</taxon>
        <taxon>Halobacteriales</taxon>
        <taxon>Haloarculaceae</taxon>
        <taxon>Natronomonas</taxon>
    </lineage>
</organism>
<name>RL4_NATPD</name>
<sequence length="248" mass="26772">MKATVRDLDGDDAGEVELPAVFETDYRPDLIKRAVLAAQANRIQDTGTDEYAGLRTPAESPGSGRGMAHVPRQNGRAREVPQAVSGRPAHPPKAEKDRGLDINTKERKLATRSAIAATANADRVEERGHEFDEETDLPLVVSDEFEDLVKTQEAVDVLEALGVYDDIERAEDGKTVRAGRGTTRGRKYTEPKSVLVVTSDDQSLAARNLAGSDVATADEVNVEDLAPGTQAGRLTLWTESALAEVAER</sequence>
<comment type="function">
    <text evidence="1">One of the primary rRNA binding proteins, this protein initially binds near the 5'-end of the 23S rRNA. It is important during the early stages of 50S assembly. It makes multiple contacts with different domains of the 23S rRNA in the assembled 50S subunit and ribosome.</text>
</comment>
<comment type="function">
    <text evidence="1">Forms part of the polypeptide exit tunnel.</text>
</comment>
<comment type="subunit">
    <text evidence="1">Part of the 50S ribosomal subunit.</text>
</comment>
<comment type="similarity">
    <text evidence="1">Belongs to the universal ribosomal protein uL4 family.</text>
</comment>